<protein>
    <recommendedName>
        <fullName evidence="1">Probable GTP-binding protein EngB</fullName>
    </recommendedName>
</protein>
<name>ENGB_MYCS5</name>
<reference key="1">
    <citation type="journal article" date="2005" name="J. Bacteriol.">
        <title>Swine and poultry pathogens: the complete genome sequences of two strains of Mycoplasma hyopneumoniae and a strain of Mycoplasma synoviae.</title>
        <authorList>
            <person name="Vasconcelos A.T.R."/>
            <person name="Ferreira H.B."/>
            <person name="Bizarro C.V."/>
            <person name="Bonatto S.L."/>
            <person name="Carvalho M.O."/>
            <person name="Pinto P.M."/>
            <person name="Almeida D.F."/>
            <person name="Almeida L.G.P."/>
            <person name="Almeida R."/>
            <person name="Alves-Junior L."/>
            <person name="Assuncao E.N."/>
            <person name="Azevedo V.A.C."/>
            <person name="Bogo M.R."/>
            <person name="Brigido M.M."/>
            <person name="Brocchi M."/>
            <person name="Burity H.A."/>
            <person name="Camargo A.A."/>
            <person name="Camargo S.S."/>
            <person name="Carepo M.S."/>
            <person name="Carraro D.M."/>
            <person name="de Mattos Cascardo J.C."/>
            <person name="Castro L.A."/>
            <person name="Cavalcanti G."/>
            <person name="Chemale G."/>
            <person name="Collevatti R.G."/>
            <person name="Cunha C.W."/>
            <person name="Dallagiovanna B."/>
            <person name="Dambros B.P."/>
            <person name="Dellagostin O.A."/>
            <person name="Falcao C."/>
            <person name="Fantinatti-Garboggini F."/>
            <person name="Felipe M.S.S."/>
            <person name="Fiorentin L."/>
            <person name="Franco G.R."/>
            <person name="Freitas N.S.A."/>
            <person name="Frias D."/>
            <person name="Grangeiro T.B."/>
            <person name="Grisard E.C."/>
            <person name="Guimaraes C.T."/>
            <person name="Hungria M."/>
            <person name="Jardim S.N."/>
            <person name="Krieger M.A."/>
            <person name="Laurino J.P."/>
            <person name="Lima L.F.A."/>
            <person name="Lopes M.I."/>
            <person name="Loreto E.L.S."/>
            <person name="Madeira H.M.F."/>
            <person name="Manfio G.P."/>
            <person name="Maranhao A.Q."/>
            <person name="Martinkovics C.T."/>
            <person name="Medeiros S.R.B."/>
            <person name="Moreira M.A.M."/>
            <person name="Neiva M."/>
            <person name="Ramalho-Neto C.E."/>
            <person name="Nicolas M.F."/>
            <person name="Oliveira S.C."/>
            <person name="Paixao R.F.C."/>
            <person name="Pedrosa F.O."/>
            <person name="Pena S.D.J."/>
            <person name="Pereira M."/>
            <person name="Pereira-Ferrari L."/>
            <person name="Piffer I."/>
            <person name="Pinto L.S."/>
            <person name="Potrich D.P."/>
            <person name="Salim A.C.M."/>
            <person name="Santos F.R."/>
            <person name="Schmitt R."/>
            <person name="Schneider M.P.C."/>
            <person name="Schrank A."/>
            <person name="Schrank I.S."/>
            <person name="Schuck A.F."/>
            <person name="Seuanez H.N."/>
            <person name="Silva D.W."/>
            <person name="Silva R."/>
            <person name="Silva S.C."/>
            <person name="Soares C.M.A."/>
            <person name="Souza K.R.L."/>
            <person name="Souza R.C."/>
            <person name="Staats C.C."/>
            <person name="Steffens M.B.R."/>
            <person name="Teixeira S.M.R."/>
            <person name="Urmenyi T.P."/>
            <person name="Vainstein M.H."/>
            <person name="Zuccherato L.W."/>
            <person name="Simpson A.J.G."/>
            <person name="Zaha A."/>
        </authorList>
    </citation>
    <scope>NUCLEOTIDE SEQUENCE [LARGE SCALE GENOMIC DNA]</scope>
    <source>
        <strain>53</strain>
    </source>
</reference>
<proteinExistence type="inferred from homology"/>
<evidence type="ECO:0000255" key="1">
    <source>
        <dbReference type="HAMAP-Rule" id="MF_00321"/>
    </source>
</evidence>
<feature type="chain" id="PRO_0000266901" description="Probable GTP-binding protein EngB">
    <location>
        <begin position="1"/>
        <end position="187"/>
    </location>
</feature>
<feature type="domain" description="EngB-type G" evidence="1">
    <location>
        <begin position="18"/>
        <end position="187"/>
    </location>
</feature>
<feature type="binding site" evidence="1">
    <location>
        <begin position="26"/>
        <end position="33"/>
    </location>
    <ligand>
        <name>GTP</name>
        <dbReference type="ChEBI" id="CHEBI:37565"/>
    </ligand>
</feature>
<feature type="binding site" evidence="1">
    <location>
        <position position="33"/>
    </location>
    <ligand>
        <name>Mg(2+)</name>
        <dbReference type="ChEBI" id="CHEBI:18420"/>
    </ligand>
</feature>
<feature type="binding site" evidence="1">
    <location>
        <begin position="52"/>
        <end position="56"/>
    </location>
    <ligand>
        <name>GTP</name>
        <dbReference type="ChEBI" id="CHEBI:37565"/>
    </ligand>
</feature>
<feature type="binding site" evidence="1">
    <location>
        <position position="54"/>
    </location>
    <ligand>
        <name>Mg(2+)</name>
        <dbReference type="ChEBI" id="CHEBI:18420"/>
    </ligand>
</feature>
<feature type="binding site" evidence="1">
    <location>
        <begin position="70"/>
        <end position="73"/>
    </location>
    <ligand>
        <name>GTP</name>
        <dbReference type="ChEBI" id="CHEBI:37565"/>
    </ligand>
</feature>
<feature type="binding site" evidence="1">
    <location>
        <begin position="137"/>
        <end position="140"/>
    </location>
    <ligand>
        <name>GTP</name>
        <dbReference type="ChEBI" id="CHEBI:37565"/>
    </ligand>
</feature>
<feature type="binding site" evidence="1">
    <location>
        <begin position="168"/>
        <end position="170"/>
    </location>
    <ligand>
        <name>GTP</name>
        <dbReference type="ChEBI" id="CHEBI:37565"/>
    </ligand>
</feature>
<keyword id="KW-0131">Cell cycle</keyword>
<keyword id="KW-0132">Cell division</keyword>
<keyword id="KW-0342">GTP-binding</keyword>
<keyword id="KW-0460">Magnesium</keyword>
<keyword id="KW-0479">Metal-binding</keyword>
<keyword id="KW-0547">Nucleotide-binding</keyword>
<keyword id="KW-1185">Reference proteome</keyword>
<keyword id="KW-0717">Septation</keyword>
<organism>
    <name type="scientific">Mycoplasmopsis synoviae (strain 53)</name>
    <name type="common">Mycoplasma synoviae</name>
    <dbReference type="NCBI Taxonomy" id="262723"/>
    <lineage>
        <taxon>Bacteria</taxon>
        <taxon>Bacillati</taxon>
        <taxon>Mycoplasmatota</taxon>
        <taxon>Mycoplasmoidales</taxon>
        <taxon>Metamycoplasmataceae</taxon>
        <taxon>Mycoplasmopsis</taxon>
    </lineage>
</organism>
<dbReference type="EMBL" id="AE017245">
    <property type="protein sequence ID" value="AAZ44057.1"/>
    <property type="molecule type" value="Genomic_DNA"/>
</dbReference>
<dbReference type="SMR" id="Q4A5B4"/>
<dbReference type="STRING" id="262723.MS53_0650"/>
<dbReference type="KEGG" id="msy:MS53_0650"/>
<dbReference type="eggNOG" id="COG0218">
    <property type="taxonomic scope" value="Bacteria"/>
</dbReference>
<dbReference type="HOGENOM" id="CLU_033732_3_2_14"/>
<dbReference type="OrthoDB" id="9804921at2"/>
<dbReference type="Proteomes" id="UP000000549">
    <property type="component" value="Chromosome"/>
</dbReference>
<dbReference type="GO" id="GO:0005525">
    <property type="term" value="F:GTP binding"/>
    <property type="evidence" value="ECO:0007669"/>
    <property type="project" value="UniProtKB-UniRule"/>
</dbReference>
<dbReference type="GO" id="GO:0046872">
    <property type="term" value="F:metal ion binding"/>
    <property type="evidence" value="ECO:0007669"/>
    <property type="project" value="UniProtKB-KW"/>
</dbReference>
<dbReference type="GO" id="GO:0000917">
    <property type="term" value="P:division septum assembly"/>
    <property type="evidence" value="ECO:0007669"/>
    <property type="project" value="UniProtKB-KW"/>
</dbReference>
<dbReference type="CDD" id="cd01876">
    <property type="entry name" value="YihA_EngB"/>
    <property type="match status" value="1"/>
</dbReference>
<dbReference type="Gene3D" id="3.40.50.300">
    <property type="entry name" value="P-loop containing nucleotide triphosphate hydrolases"/>
    <property type="match status" value="1"/>
</dbReference>
<dbReference type="HAMAP" id="MF_00321">
    <property type="entry name" value="GTPase_EngB"/>
    <property type="match status" value="1"/>
</dbReference>
<dbReference type="InterPro" id="IPR030393">
    <property type="entry name" value="G_ENGB_dom"/>
</dbReference>
<dbReference type="InterPro" id="IPR006073">
    <property type="entry name" value="GTP-bd"/>
</dbReference>
<dbReference type="InterPro" id="IPR019987">
    <property type="entry name" value="GTP-bd_ribosome_bio_YsxC"/>
</dbReference>
<dbReference type="InterPro" id="IPR027417">
    <property type="entry name" value="P-loop_NTPase"/>
</dbReference>
<dbReference type="NCBIfam" id="TIGR03598">
    <property type="entry name" value="GTPase_YsxC"/>
    <property type="match status" value="1"/>
</dbReference>
<dbReference type="PANTHER" id="PTHR11649:SF13">
    <property type="entry name" value="ENGB-TYPE G DOMAIN-CONTAINING PROTEIN"/>
    <property type="match status" value="1"/>
</dbReference>
<dbReference type="PANTHER" id="PTHR11649">
    <property type="entry name" value="MSS1/TRME-RELATED GTP-BINDING PROTEIN"/>
    <property type="match status" value="1"/>
</dbReference>
<dbReference type="Pfam" id="PF01926">
    <property type="entry name" value="MMR_HSR1"/>
    <property type="match status" value="1"/>
</dbReference>
<dbReference type="SUPFAM" id="SSF52540">
    <property type="entry name" value="P-loop containing nucleoside triphosphate hydrolases"/>
    <property type="match status" value="1"/>
</dbReference>
<dbReference type="PROSITE" id="PS51706">
    <property type="entry name" value="G_ENGB"/>
    <property type="match status" value="1"/>
</dbReference>
<accession>Q4A5B4</accession>
<gene>
    <name evidence="1" type="primary">engB</name>
    <name type="ordered locus">MS53_0650</name>
</gene>
<comment type="function">
    <text evidence="1">Necessary for normal cell division and for the maintenance of normal septation.</text>
</comment>
<comment type="cofactor">
    <cofactor evidence="1">
        <name>Mg(2+)</name>
        <dbReference type="ChEBI" id="CHEBI:18420"/>
    </cofactor>
</comment>
<comment type="similarity">
    <text evidence="1">Belongs to the TRAFAC class TrmE-Era-EngA-EngB-Septin-like GTPase superfamily. EngB GTPase family.</text>
</comment>
<sequence>MFKFVKSSSDYTNWYFHKNSEIAFWGRSNVGKSSLLNALTSKGLAKVSKTPGRTQLINFFENELNQVYVDLPGYGYAKLSKDLKDKMMAMIEEYLLNRSNLKMLYLLIDSRLGFTKIDLEILSFLKENNLNYFIVFTKIDKLNTKEKNELNKKIKTYLEKESFNYLIVSSETKYQIDKLKENINSNF</sequence>